<organism>
    <name type="scientific">Haloferax volcanii (strain ATCC 29605 / DSM 3757 / JCM 8879 / NBRC 14742 / NCIMB 2012 / VKM B-1768 / DS2)</name>
    <name type="common">Halobacterium volcanii</name>
    <dbReference type="NCBI Taxonomy" id="309800"/>
    <lineage>
        <taxon>Archaea</taxon>
        <taxon>Methanobacteriati</taxon>
        <taxon>Methanobacteriota</taxon>
        <taxon>Stenosarchaea group</taxon>
        <taxon>Halobacteria</taxon>
        <taxon>Halobacteriales</taxon>
        <taxon>Haloferacaceae</taxon>
        <taxon>Haloferax</taxon>
    </lineage>
</organism>
<reference key="1">
    <citation type="journal article" date="2010" name="PLoS ONE">
        <title>The complete genome sequence of Haloferax volcanii DS2, a model archaeon.</title>
        <authorList>
            <person name="Hartman A.L."/>
            <person name="Norais C."/>
            <person name="Badger J.H."/>
            <person name="Delmas S."/>
            <person name="Haldenby S."/>
            <person name="Madupu R."/>
            <person name="Robinson J."/>
            <person name="Khouri H."/>
            <person name="Ren Q."/>
            <person name="Lowe T.M."/>
            <person name="Maupin-Furlow J."/>
            <person name="Pohlschroder M."/>
            <person name="Daniels C."/>
            <person name="Pfeiffer F."/>
            <person name="Allers T."/>
            <person name="Eisen J.A."/>
        </authorList>
    </citation>
    <scope>NUCLEOTIDE SEQUENCE [LARGE SCALE GENOMIC DNA]</scope>
    <source>
        <strain>ATCC 29605 / DSM 3757 / JCM 8879 / NBRC 14742 / NCIMB 2012 / VKM B-1768 / DS2</strain>
    </source>
</reference>
<feature type="chain" id="PRO_0000415452" description="HGPRTase-like protein 2">
    <location>
        <begin position="1"/>
        <end position="181"/>
    </location>
</feature>
<comment type="function">
    <text evidence="1">May catalyze a purine salvage reaction, the substrate is unknown.</text>
</comment>
<comment type="similarity">
    <text evidence="1">Belongs to the purine/pyrimidine phosphoribosyltransferase family. Archaeal HPRT subfamily.</text>
</comment>
<protein>
    <recommendedName>
        <fullName evidence="1">HGPRTase-like protein 2</fullName>
        <ecNumber evidence="1">2.4.2.-</ecNumber>
    </recommendedName>
</protein>
<gene>
    <name type="ordered locus">HVO_2250</name>
</gene>
<sequence length="181" mass="19482">MQRLEESLHEAPIIDKDGYSYLVHPISNGVPMLDPQLLREVVVGITRAADLDVDKIVAPEAMGIHIATALSLQTDVPLVVIRKREYGLDGEVALHQTTGYSESEMFINDIEDGDRVLVVDDLLSTGGTLAAICGALDDIGAEVSDIVVAIRKVGETALDDTDYEATSLVDISVDEDGVEIH</sequence>
<accession>D4GVW6</accession>
<evidence type="ECO:0000255" key="1">
    <source>
        <dbReference type="HAMAP-Rule" id="MF_01467"/>
    </source>
</evidence>
<keyword id="KW-0660">Purine salvage</keyword>
<keyword id="KW-1185">Reference proteome</keyword>
<keyword id="KW-0808">Transferase</keyword>
<dbReference type="EC" id="2.4.2.-" evidence="1"/>
<dbReference type="EMBL" id="CP001956">
    <property type="protein sequence ID" value="ADE04456.1"/>
    <property type="molecule type" value="Genomic_DNA"/>
</dbReference>
<dbReference type="RefSeq" id="WP_004042138.1">
    <property type="nucleotide sequence ID" value="NC_013967.1"/>
</dbReference>
<dbReference type="SMR" id="D4GVW6"/>
<dbReference type="STRING" id="309800.HVO_2250"/>
<dbReference type="PaxDb" id="309800-C498_06523"/>
<dbReference type="EnsemblBacteria" id="ADE04456">
    <property type="protein sequence ID" value="ADE04456"/>
    <property type="gene ID" value="HVO_2250"/>
</dbReference>
<dbReference type="GeneID" id="8925144"/>
<dbReference type="KEGG" id="hvo:HVO_2250"/>
<dbReference type="eggNOG" id="arCOG00030">
    <property type="taxonomic scope" value="Archaea"/>
</dbReference>
<dbReference type="HOGENOM" id="CLU_126376_0_0_2"/>
<dbReference type="OrthoDB" id="8323at2157"/>
<dbReference type="Proteomes" id="UP000008243">
    <property type="component" value="Chromosome"/>
</dbReference>
<dbReference type="GO" id="GO:0016740">
    <property type="term" value="F:transferase activity"/>
    <property type="evidence" value="ECO:0007669"/>
    <property type="project" value="UniProtKB-KW"/>
</dbReference>
<dbReference type="GO" id="GO:0006166">
    <property type="term" value="P:purine ribonucleoside salvage"/>
    <property type="evidence" value="ECO:0007669"/>
    <property type="project" value="UniProtKB-KW"/>
</dbReference>
<dbReference type="CDD" id="cd06223">
    <property type="entry name" value="PRTases_typeI"/>
    <property type="match status" value="1"/>
</dbReference>
<dbReference type="Gene3D" id="3.40.50.2020">
    <property type="match status" value="1"/>
</dbReference>
<dbReference type="HAMAP" id="MF_01467">
    <property type="entry name" value="Hypx_phosphoribosyltr"/>
    <property type="match status" value="1"/>
</dbReference>
<dbReference type="InterPro" id="IPR026597">
    <property type="entry name" value="HGPRTase-like"/>
</dbReference>
<dbReference type="InterPro" id="IPR000836">
    <property type="entry name" value="PRibTrfase_dom"/>
</dbReference>
<dbReference type="InterPro" id="IPR029057">
    <property type="entry name" value="PRTase-like"/>
</dbReference>
<dbReference type="InterPro" id="IPR050118">
    <property type="entry name" value="Pur/Pyrimidine_PRTase"/>
</dbReference>
<dbReference type="NCBIfam" id="NF040646">
    <property type="entry name" value="HPT_Archaea"/>
    <property type="match status" value="1"/>
</dbReference>
<dbReference type="NCBIfam" id="NF002635">
    <property type="entry name" value="PRK02304.1-4"/>
    <property type="match status" value="1"/>
</dbReference>
<dbReference type="PANTHER" id="PTHR43864">
    <property type="entry name" value="HYPOXANTHINE/GUANINE PHOSPHORIBOSYLTRANSFERASE"/>
    <property type="match status" value="1"/>
</dbReference>
<dbReference type="PANTHER" id="PTHR43864:SF1">
    <property type="entry name" value="XANTHINE PHOSPHORIBOSYLTRANSFERASE"/>
    <property type="match status" value="1"/>
</dbReference>
<dbReference type="Pfam" id="PF00156">
    <property type="entry name" value="Pribosyltran"/>
    <property type="match status" value="1"/>
</dbReference>
<dbReference type="SUPFAM" id="SSF53271">
    <property type="entry name" value="PRTase-like"/>
    <property type="match status" value="1"/>
</dbReference>
<dbReference type="PROSITE" id="PS00103">
    <property type="entry name" value="PUR_PYR_PR_TRANSFER"/>
    <property type="match status" value="1"/>
</dbReference>
<proteinExistence type="inferred from homology"/>
<name>HPRL2_HALVD</name>